<proteinExistence type="inferred from homology"/>
<evidence type="ECO:0000255" key="1">
    <source>
        <dbReference type="HAMAP-Rule" id="MF_00688"/>
    </source>
</evidence>
<reference key="1">
    <citation type="journal article" date="2006" name="PLoS Biol.">
        <title>The genome of deep-sea vent chemolithoautotroph Thiomicrospira crunogena XCL-2.</title>
        <authorList>
            <person name="Scott K.M."/>
            <person name="Sievert S.M."/>
            <person name="Abril F.N."/>
            <person name="Ball L.A."/>
            <person name="Barrett C.J."/>
            <person name="Blake R.A."/>
            <person name="Boller A.J."/>
            <person name="Chain P.S.G."/>
            <person name="Clark J.A."/>
            <person name="Davis C.R."/>
            <person name="Detter C."/>
            <person name="Do K.F."/>
            <person name="Dobrinski K.P."/>
            <person name="Faza B.I."/>
            <person name="Fitzpatrick K.A."/>
            <person name="Freyermuth S.K."/>
            <person name="Harmer T.L."/>
            <person name="Hauser L.J."/>
            <person name="Huegler M."/>
            <person name="Kerfeld C.A."/>
            <person name="Klotz M.G."/>
            <person name="Kong W.W."/>
            <person name="Land M."/>
            <person name="Lapidus A."/>
            <person name="Larimer F.W."/>
            <person name="Longo D.L."/>
            <person name="Lucas S."/>
            <person name="Malfatti S.A."/>
            <person name="Massey S.E."/>
            <person name="Martin D.D."/>
            <person name="McCuddin Z."/>
            <person name="Meyer F."/>
            <person name="Moore J.L."/>
            <person name="Ocampo L.H. Jr."/>
            <person name="Paul J.H."/>
            <person name="Paulsen I.T."/>
            <person name="Reep D.K."/>
            <person name="Ren Q."/>
            <person name="Ross R.L."/>
            <person name="Sato P.Y."/>
            <person name="Thomas P."/>
            <person name="Tinkham L.E."/>
            <person name="Zeruth G.T."/>
        </authorList>
    </citation>
    <scope>NUCLEOTIDE SEQUENCE [LARGE SCALE GENOMIC DNA]</scope>
    <source>
        <strain>DSM 25203 / XCL-2</strain>
    </source>
</reference>
<protein>
    <recommendedName>
        <fullName evidence="1">Leucyl/phenylalanyl-tRNA--protein transferase</fullName>
        <ecNumber evidence="1">2.3.2.6</ecNumber>
    </recommendedName>
    <alternativeName>
        <fullName evidence="1">L/F-transferase</fullName>
    </alternativeName>
    <alternativeName>
        <fullName evidence="1">Leucyltransferase</fullName>
    </alternativeName>
    <alternativeName>
        <fullName evidence="1">Phenyalanyltransferase</fullName>
    </alternativeName>
</protein>
<organism>
    <name type="scientific">Hydrogenovibrio crunogenus (strain DSM 25203 / XCL-2)</name>
    <name type="common">Thiomicrospira crunogena</name>
    <dbReference type="NCBI Taxonomy" id="317025"/>
    <lineage>
        <taxon>Bacteria</taxon>
        <taxon>Pseudomonadati</taxon>
        <taxon>Pseudomonadota</taxon>
        <taxon>Gammaproteobacteria</taxon>
        <taxon>Thiotrichales</taxon>
        <taxon>Piscirickettsiaceae</taxon>
        <taxon>Hydrogenovibrio</taxon>
    </lineage>
</organism>
<gene>
    <name evidence="1" type="primary">aat</name>
    <name type="ordered locus">Tcr_1114</name>
</gene>
<comment type="function">
    <text evidence="1">Functions in the N-end rule pathway of protein degradation where it conjugates Leu, Phe and, less efficiently, Met from aminoacyl-tRNAs to the N-termini of proteins containing an N-terminal arginine or lysine.</text>
</comment>
<comment type="catalytic activity">
    <reaction evidence="1">
        <text>N-terminal L-lysyl-[protein] + L-leucyl-tRNA(Leu) = N-terminal L-leucyl-L-lysyl-[protein] + tRNA(Leu) + H(+)</text>
        <dbReference type="Rhea" id="RHEA:12340"/>
        <dbReference type="Rhea" id="RHEA-COMP:9613"/>
        <dbReference type="Rhea" id="RHEA-COMP:9622"/>
        <dbReference type="Rhea" id="RHEA-COMP:12670"/>
        <dbReference type="Rhea" id="RHEA-COMP:12671"/>
        <dbReference type="ChEBI" id="CHEBI:15378"/>
        <dbReference type="ChEBI" id="CHEBI:65249"/>
        <dbReference type="ChEBI" id="CHEBI:78442"/>
        <dbReference type="ChEBI" id="CHEBI:78494"/>
        <dbReference type="ChEBI" id="CHEBI:133043"/>
        <dbReference type="EC" id="2.3.2.6"/>
    </reaction>
</comment>
<comment type="catalytic activity">
    <reaction evidence="1">
        <text>N-terminal L-arginyl-[protein] + L-leucyl-tRNA(Leu) = N-terminal L-leucyl-L-arginyl-[protein] + tRNA(Leu) + H(+)</text>
        <dbReference type="Rhea" id="RHEA:50416"/>
        <dbReference type="Rhea" id="RHEA-COMP:9613"/>
        <dbReference type="Rhea" id="RHEA-COMP:9622"/>
        <dbReference type="Rhea" id="RHEA-COMP:12672"/>
        <dbReference type="Rhea" id="RHEA-COMP:12673"/>
        <dbReference type="ChEBI" id="CHEBI:15378"/>
        <dbReference type="ChEBI" id="CHEBI:64719"/>
        <dbReference type="ChEBI" id="CHEBI:78442"/>
        <dbReference type="ChEBI" id="CHEBI:78494"/>
        <dbReference type="ChEBI" id="CHEBI:133044"/>
        <dbReference type="EC" id="2.3.2.6"/>
    </reaction>
</comment>
<comment type="catalytic activity">
    <reaction evidence="1">
        <text>L-phenylalanyl-tRNA(Phe) + an N-terminal L-alpha-aminoacyl-[protein] = an N-terminal L-phenylalanyl-L-alpha-aminoacyl-[protein] + tRNA(Phe)</text>
        <dbReference type="Rhea" id="RHEA:43632"/>
        <dbReference type="Rhea" id="RHEA-COMP:9668"/>
        <dbReference type="Rhea" id="RHEA-COMP:9699"/>
        <dbReference type="Rhea" id="RHEA-COMP:10636"/>
        <dbReference type="Rhea" id="RHEA-COMP:10637"/>
        <dbReference type="ChEBI" id="CHEBI:78442"/>
        <dbReference type="ChEBI" id="CHEBI:78531"/>
        <dbReference type="ChEBI" id="CHEBI:78597"/>
        <dbReference type="ChEBI" id="CHEBI:83561"/>
        <dbReference type="EC" id="2.3.2.6"/>
    </reaction>
</comment>
<comment type="subcellular location">
    <subcellularLocation>
        <location evidence="1">Cytoplasm</location>
    </subcellularLocation>
</comment>
<comment type="similarity">
    <text evidence="1">Belongs to the L/F-transferase family.</text>
</comment>
<accession>Q31GL4</accession>
<feature type="chain" id="PRO_0000258107" description="Leucyl/phenylalanyl-tRNA--protein transferase">
    <location>
        <begin position="1"/>
        <end position="256"/>
    </location>
</feature>
<name>LFTR_HYDCU</name>
<sequence>MSEPIHQPFWLDSKPVVFPPTHLAMTEPDGLLAVGGDLTPEWLLNAYHKGIFPWFNEDDPILWWTPNPRSVLFINSLKVRRSLIKTIRKQQFTVTLDQQFEDVMHQCANIERHDQDGTWISEEMLSAYTQLHKSGHAHSVEVWKDNQLVGGLYGVAIGKVFFGESMFSKVPDASKIALVALCQQLKAWGFRIIDTQMETAHLRSLGATLISREYFESILKQETHKDFAPKPWTLEVDWQAPFLAQPTIKKQKTTTP</sequence>
<keyword id="KW-0012">Acyltransferase</keyword>
<keyword id="KW-0963">Cytoplasm</keyword>
<keyword id="KW-0808">Transferase</keyword>
<dbReference type="EC" id="2.3.2.6" evidence="1"/>
<dbReference type="EMBL" id="CP000109">
    <property type="protein sequence ID" value="ABB41709.1"/>
    <property type="molecule type" value="Genomic_DNA"/>
</dbReference>
<dbReference type="SMR" id="Q31GL4"/>
<dbReference type="STRING" id="317025.Tcr_1114"/>
<dbReference type="KEGG" id="tcx:Tcr_1114"/>
<dbReference type="eggNOG" id="COG2360">
    <property type="taxonomic scope" value="Bacteria"/>
</dbReference>
<dbReference type="HOGENOM" id="CLU_075045_0_0_6"/>
<dbReference type="OrthoDB" id="9790282at2"/>
<dbReference type="GO" id="GO:0005737">
    <property type="term" value="C:cytoplasm"/>
    <property type="evidence" value="ECO:0007669"/>
    <property type="project" value="UniProtKB-SubCell"/>
</dbReference>
<dbReference type="GO" id="GO:0008914">
    <property type="term" value="F:leucyl-tRNA--protein transferase activity"/>
    <property type="evidence" value="ECO:0007669"/>
    <property type="project" value="UniProtKB-UniRule"/>
</dbReference>
<dbReference type="GO" id="GO:0030163">
    <property type="term" value="P:protein catabolic process"/>
    <property type="evidence" value="ECO:0007669"/>
    <property type="project" value="UniProtKB-UniRule"/>
</dbReference>
<dbReference type="FunFam" id="3.30.70.3550:FF:000001">
    <property type="entry name" value="Leucyl/phenylalanyl-tRNA--protein transferase"/>
    <property type="match status" value="1"/>
</dbReference>
<dbReference type="FunFam" id="3.40.630.70:FF:000001">
    <property type="entry name" value="Leucyl/phenylalanyl-tRNA--protein transferase"/>
    <property type="match status" value="1"/>
</dbReference>
<dbReference type="Gene3D" id="3.40.630.70">
    <property type="entry name" value="Leucyl/phenylalanyl-tRNA-protein transferase, C-terminal domain"/>
    <property type="match status" value="1"/>
</dbReference>
<dbReference type="Gene3D" id="3.30.70.3550">
    <property type="entry name" value="Leucyl/phenylalanyl-tRNA-protein transferase, N-terminal domain"/>
    <property type="match status" value="1"/>
</dbReference>
<dbReference type="HAMAP" id="MF_00688">
    <property type="entry name" value="Leu_Phe_trans"/>
    <property type="match status" value="1"/>
</dbReference>
<dbReference type="InterPro" id="IPR016181">
    <property type="entry name" value="Acyl_CoA_acyltransferase"/>
</dbReference>
<dbReference type="InterPro" id="IPR004616">
    <property type="entry name" value="Leu/Phe-tRNA_Trfase"/>
</dbReference>
<dbReference type="InterPro" id="IPR042203">
    <property type="entry name" value="Leu/Phe-tRNA_Trfase_C"/>
</dbReference>
<dbReference type="InterPro" id="IPR042221">
    <property type="entry name" value="Leu/Phe-tRNA_Trfase_N"/>
</dbReference>
<dbReference type="NCBIfam" id="TIGR00667">
    <property type="entry name" value="aat"/>
    <property type="match status" value="1"/>
</dbReference>
<dbReference type="PANTHER" id="PTHR30098">
    <property type="entry name" value="LEUCYL/PHENYLALANYL-TRNA--PROTEIN TRANSFERASE"/>
    <property type="match status" value="1"/>
</dbReference>
<dbReference type="PANTHER" id="PTHR30098:SF2">
    <property type="entry name" value="LEUCYL_PHENYLALANYL-TRNA--PROTEIN TRANSFERASE"/>
    <property type="match status" value="1"/>
</dbReference>
<dbReference type="Pfam" id="PF03588">
    <property type="entry name" value="Leu_Phe_trans"/>
    <property type="match status" value="1"/>
</dbReference>
<dbReference type="SUPFAM" id="SSF55729">
    <property type="entry name" value="Acyl-CoA N-acyltransferases (Nat)"/>
    <property type="match status" value="1"/>
</dbReference>